<protein>
    <recommendedName>
        <fullName evidence="1">Translation initiation factor IF-1</fullName>
    </recommendedName>
</protein>
<accession>A5WGT1</accession>
<reference key="1">
    <citation type="submission" date="2007-05" db="EMBL/GenBank/DDBJ databases">
        <title>Complete sequence of chromosome of Psychrobacter sp. PRwf-1.</title>
        <authorList>
            <consortium name="US DOE Joint Genome Institute"/>
            <person name="Copeland A."/>
            <person name="Lucas S."/>
            <person name="Lapidus A."/>
            <person name="Barry K."/>
            <person name="Detter J.C."/>
            <person name="Glavina del Rio T."/>
            <person name="Hammon N."/>
            <person name="Israni S."/>
            <person name="Dalin E."/>
            <person name="Tice H."/>
            <person name="Pitluck S."/>
            <person name="Chain P."/>
            <person name="Malfatti S."/>
            <person name="Shin M."/>
            <person name="Vergez L."/>
            <person name="Schmutz J."/>
            <person name="Larimer F."/>
            <person name="Land M."/>
            <person name="Hauser L."/>
            <person name="Kyrpides N."/>
            <person name="Kim E."/>
            <person name="Tiedje J."/>
            <person name="Richardson P."/>
        </authorList>
    </citation>
    <scope>NUCLEOTIDE SEQUENCE [LARGE SCALE GENOMIC DNA]</scope>
    <source>
        <strain>PRwf-1</strain>
    </source>
</reference>
<gene>
    <name evidence="1" type="primary">infA</name>
    <name type="ordered locus">PsycPRwf_1932</name>
</gene>
<proteinExistence type="inferred from homology"/>
<sequence>MAKKDDIIEFEGEVIDTLPNTLFKVRLENGHEIIAHISGKMRKHYIRILTGDKVKVEMTPYDLTKGRITYRGKT</sequence>
<keyword id="KW-0963">Cytoplasm</keyword>
<keyword id="KW-0396">Initiation factor</keyword>
<keyword id="KW-0648">Protein biosynthesis</keyword>
<keyword id="KW-0694">RNA-binding</keyword>
<keyword id="KW-0699">rRNA-binding</keyword>
<organism>
    <name type="scientific">Psychrobacter sp. (strain PRwf-1)</name>
    <dbReference type="NCBI Taxonomy" id="349106"/>
    <lineage>
        <taxon>Bacteria</taxon>
        <taxon>Pseudomonadati</taxon>
        <taxon>Pseudomonadota</taxon>
        <taxon>Gammaproteobacteria</taxon>
        <taxon>Moraxellales</taxon>
        <taxon>Moraxellaceae</taxon>
        <taxon>Psychrobacter</taxon>
    </lineage>
</organism>
<dbReference type="EMBL" id="CP000713">
    <property type="protein sequence ID" value="ABQ94872.1"/>
    <property type="molecule type" value="Genomic_DNA"/>
</dbReference>
<dbReference type="SMR" id="A5WGT1"/>
<dbReference type="STRING" id="349106.PsycPRwf_1932"/>
<dbReference type="KEGG" id="prw:PsycPRwf_1932"/>
<dbReference type="eggNOG" id="COG0361">
    <property type="taxonomic scope" value="Bacteria"/>
</dbReference>
<dbReference type="HOGENOM" id="CLU_151267_1_0_6"/>
<dbReference type="GO" id="GO:0005829">
    <property type="term" value="C:cytosol"/>
    <property type="evidence" value="ECO:0007669"/>
    <property type="project" value="TreeGrafter"/>
</dbReference>
<dbReference type="GO" id="GO:0043022">
    <property type="term" value="F:ribosome binding"/>
    <property type="evidence" value="ECO:0007669"/>
    <property type="project" value="UniProtKB-UniRule"/>
</dbReference>
<dbReference type="GO" id="GO:0019843">
    <property type="term" value="F:rRNA binding"/>
    <property type="evidence" value="ECO:0007669"/>
    <property type="project" value="UniProtKB-UniRule"/>
</dbReference>
<dbReference type="GO" id="GO:0003743">
    <property type="term" value="F:translation initiation factor activity"/>
    <property type="evidence" value="ECO:0007669"/>
    <property type="project" value="UniProtKB-UniRule"/>
</dbReference>
<dbReference type="CDD" id="cd04451">
    <property type="entry name" value="S1_IF1"/>
    <property type="match status" value="1"/>
</dbReference>
<dbReference type="FunFam" id="2.40.50.140:FF:000002">
    <property type="entry name" value="Translation initiation factor IF-1"/>
    <property type="match status" value="1"/>
</dbReference>
<dbReference type="Gene3D" id="2.40.50.140">
    <property type="entry name" value="Nucleic acid-binding proteins"/>
    <property type="match status" value="1"/>
</dbReference>
<dbReference type="HAMAP" id="MF_00075">
    <property type="entry name" value="IF_1"/>
    <property type="match status" value="1"/>
</dbReference>
<dbReference type="InterPro" id="IPR012340">
    <property type="entry name" value="NA-bd_OB-fold"/>
</dbReference>
<dbReference type="InterPro" id="IPR006196">
    <property type="entry name" value="RNA-binding_domain_S1_IF1"/>
</dbReference>
<dbReference type="InterPro" id="IPR003029">
    <property type="entry name" value="S1_domain"/>
</dbReference>
<dbReference type="InterPro" id="IPR004368">
    <property type="entry name" value="TIF_IF1"/>
</dbReference>
<dbReference type="NCBIfam" id="TIGR00008">
    <property type="entry name" value="infA"/>
    <property type="match status" value="1"/>
</dbReference>
<dbReference type="PANTHER" id="PTHR33370">
    <property type="entry name" value="TRANSLATION INITIATION FACTOR IF-1, CHLOROPLASTIC"/>
    <property type="match status" value="1"/>
</dbReference>
<dbReference type="PANTHER" id="PTHR33370:SF1">
    <property type="entry name" value="TRANSLATION INITIATION FACTOR IF-1, CHLOROPLASTIC"/>
    <property type="match status" value="1"/>
</dbReference>
<dbReference type="Pfam" id="PF01176">
    <property type="entry name" value="eIF-1a"/>
    <property type="match status" value="1"/>
</dbReference>
<dbReference type="SMART" id="SM00316">
    <property type="entry name" value="S1"/>
    <property type="match status" value="1"/>
</dbReference>
<dbReference type="SUPFAM" id="SSF50249">
    <property type="entry name" value="Nucleic acid-binding proteins"/>
    <property type="match status" value="1"/>
</dbReference>
<dbReference type="PROSITE" id="PS50832">
    <property type="entry name" value="S1_IF1_TYPE"/>
    <property type="match status" value="1"/>
</dbReference>
<comment type="function">
    <text evidence="1">One of the essential components for the initiation of protein synthesis. Stabilizes the binding of IF-2 and IF-3 on the 30S subunit to which N-formylmethionyl-tRNA(fMet) subsequently binds. Helps modulate mRNA selection, yielding the 30S pre-initiation complex (PIC). Upon addition of the 50S ribosomal subunit IF-1, IF-2 and IF-3 are released leaving the mature 70S translation initiation complex.</text>
</comment>
<comment type="subunit">
    <text evidence="1">Component of the 30S ribosomal translation pre-initiation complex which assembles on the 30S ribosome in the order IF-2 and IF-3, IF-1 and N-formylmethionyl-tRNA(fMet); mRNA recruitment can occur at any time during PIC assembly.</text>
</comment>
<comment type="subcellular location">
    <subcellularLocation>
        <location evidence="1">Cytoplasm</location>
    </subcellularLocation>
</comment>
<comment type="similarity">
    <text evidence="1">Belongs to the IF-1 family.</text>
</comment>
<feature type="chain" id="PRO_0000338894" description="Translation initiation factor IF-1">
    <location>
        <begin position="1"/>
        <end position="74"/>
    </location>
</feature>
<feature type="domain" description="S1-like" evidence="1">
    <location>
        <begin position="1"/>
        <end position="73"/>
    </location>
</feature>
<evidence type="ECO:0000255" key="1">
    <source>
        <dbReference type="HAMAP-Rule" id="MF_00075"/>
    </source>
</evidence>
<name>IF1_PSYWF</name>